<comment type="function">
    <text evidence="4">Involved in the glycolysis. Catalyzes the oxidative phosphorylation of glyceraldehyde 3-phosphate (G3P) to 1,3-bisphosphoglycerate (BPG) using the cofactor NAD. The first reaction step involves the formation of a hemiacetal intermediate between G3P and a cysteine residue, and this hemiacetal intermediate is then oxidized to a thioester, with concomitant reduction of NAD to NADH. The reduced NADH is then exchanged with the second NAD, and the thioester is attacked by a nucleophilic inorganic phosphate to produce BPG.</text>
</comment>
<comment type="catalytic activity">
    <reaction evidence="4">
        <text>D-glyceraldehyde 3-phosphate + phosphate + NAD(+) = (2R)-3-phospho-glyceroyl phosphate + NADH + H(+)</text>
        <dbReference type="Rhea" id="RHEA:10300"/>
        <dbReference type="ChEBI" id="CHEBI:15378"/>
        <dbReference type="ChEBI" id="CHEBI:43474"/>
        <dbReference type="ChEBI" id="CHEBI:57540"/>
        <dbReference type="ChEBI" id="CHEBI:57604"/>
        <dbReference type="ChEBI" id="CHEBI:57945"/>
        <dbReference type="ChEBI" id="CHEBI:59776"/>
        <dbReference type="EC" id="1.2.1.12"/>
    </reaction>
</comment>
<comment type="pathway">
    <text evidence="4">Carbohydrate degradation; glycolysis; pyruvate from D-glyceraldehyde 3-phosphate: step 1/5.</text>
</comment>
<comment type="subunit">
    <text evidence="1 6">Homotetramer (By similarity). Interacts with BrxC (PubMed:33722570).</text>
</comment>
<comment type="subcellular location">
    <subcellularLocation>
        <location evidence="3">Cytoplasm</location>
    </subcellularLocation>
</comment>
<comment type="induction">
    <text evidence="4 5">Repressed by CggR and indirectly stimulated by CcpA.</text>
</comment>
<comment type="PTM">
    <text evidence="11">In response to oxidative stress, the active site Cys likely reacts with bacillithiol (BSH) to form mixed disulfides to protect the Cys residue against overoxidation. S-bacillithiolation presumably leads to loss of catalytic activity. Debacillithiolation by monothiol bacilliredoxin BrxC restores the activity.</text>
</comment>
<comment type="disruption phenotype">
    <text evidence="4">Cells lacking this gene are unable to grow in medium containing glucose as a sole carbon source but presents the same growth rate as the wild-type in asparagine-containing medium.</text>
</comment>
<comment type="similarity">
    <text evidence="10">Belongs to the glyceraldehyde-3-phosphate dehydrogenase family.</text>
</comment>
<reference key="1">
    <citation type="journal article" date="1989" name="Nucleic Acids Res.">
        <title>Sequence of the glyceraldehyde-3-phosphate dehydrogenase gene from Bacillus subtilis.</title>
        <authorList>
            <person name="Viaene A."/>
            <person name="Dhaese P."/>
        </authorList>
    </citation>
    <scope>NUCLEOTIDE SEQUENCE [GENOMIC DNA]</scope>
    <source>
        <strain>168 / BD170</strain>
    </source>
</reference>
<reference key="2">
    <citation type="journal article" date="1997" name="Nature">
        <title>The complete genome sequence of the Gram-positive bacterium Bacillus subtilis.</title>
        <authorList>
            <person name="Kunst F."/>
            <person name="Ogasawara N."/>
            <person name="Moszer I."/>
            <person name="Albertini A.M."/>
            <person name="Alloni G."/>
            <person name="Azevedo V."/>
            <person name="Bertero M.G."/>
            <person name="Bessieres P."/>
            <person name="Bolotin A."/>
            <person name="Borchert S."/>
            <person name="Borriss R."/>
            <person name="Boursier L."/>
            <person name="Brans A."/>
            <person name="Braun M."/>
            <person name="Brignell S.C."/>
            <person name="Bron S."/>
            <person name="Brouillet S."/>
            <person name="Bruschi C.V."/>
            <person name="Caldwell B."/>
            <person name="Capuano V."/>
            <person name="Carter N.M."/>
            <person name="Choi S.-K."/>
            <person name="Codani J.-J."/>
            <person name="Connerton I.F."/>
            <person name="Cummings N.J."/>
            <person name="Daniel R.A."/>
            <person name="Denizot F."/>
            <person name="Devine K.M."/>
            <person name="Duesterhoeft A."/>
            <person name="Ehrlich S.D."/>
            <person name="Emmerson P.T."/>
            <person name="Entian K.-D."/>
            <person name="Errington J."/>
            <person name="Fabret C."/>
            <person name="Ferrari E."/>
            <person name="Foulger D."/>
            <person name="Fritz C."/>
            <person name="Fujita M."/>
            <person name="Fujita Y."/>
            <person name="Fuma S."/>
            <person name="Galizzi A."/>
            <person name="Galleron N."/>
            <person name="Ghim S.-Y."/>
            <person name="Glaser P."/>
            <person name="Goffeau A."/>
            <person name="Golightly E.J."/>
            <person name="Grandi G."/>
            <person name="Guiseppi G."/>
            <person name="Guy B.J."/>
            <person name="Haga K."/>
            <person name="Haiech J."/>
            <person name="Harwood C.R."/>
            <person name="Henaut A."/>
            <person name="Hilbert H."/>
            <person name="Holsappel S."/>
            <person name="Hosono S."/>
            <person name="Hullo M.-F."/>
            <person name="Itaya M."/>
            <person name="Jones L.-M."/>
            <person name="Joris B."/>
            <person name="Karamata D."/>
            <person name="Kasahara Y."/>
            <person name="Klaerr-Blanchard M."/>
            <person name="Klein C."/>
            <person name="Kobayashi Y."/>
            <person name="Koetter P."/>
            <person name="Koningstein G."/>
            <person name="Krogh S."/>
            <person name="Kumano M."/>
            <person name="Kurita K."/>
            <person name="Lapidus A."/>
            <person name="Lardinois S."/>
            <person name="Lauber J."/>
            <person name="Lazarevic V."/>
            <person name="Lee S.-M."/>
            <person name="Levine A."/>
            <person name="Liu H."/>
            <person name="Masuda S."/>
            <person name="Mauel C."/>
            <person name="Medigue C."/>
            <person name="Medina N."/>
            <person name="Mellado R.P."/>
            <person name="Mizuno M."/>
            <person name="Moestl D."/>
            <person name="Nakai S."/>
            <person name="Noback M."/>
            <person name="Noone D."/>
            <person name="O'Reilly M."/>
            <person name="Ogawa K."/>
            <person name="Ogiwara A."/>
            <person name="Oudega B."/>
            <person name="Park S.-H."/>
            <person name="Parro V."/>
            <person name="Pohl T.M."/>
            <person name="Portetelle D."/>
            <person name="Porwollik S."/>
            <person name="Prescott A.M."/>
            <person name="Presecan E."/>
            <person name="Pujic P."/>
            <person name="Purnelle B."/>
            <person name="Rapoport G."/>
            <person name="Rey M."/>
            <person name="Reynolds S."/>
            <person name="Rieger M."/>
            <person name="Rivolta C."/>
            <person name="Rocha E."/>
            <person name="Roche B."/>
            <person name="Rose M."/>
            <person name="Sadaie Y."/>
            <person name="Sato T."/>
            <person name="Scanlan E."/>
            <person name="Schleich S."/>
            <person name="Schroeter R."/>
            <person name="Scoffone F."/>
            <person name="Sekiguchi J."/>
            <person name="Sekowska A."/>
            <person name="Seror S.J."/>
            <person name="Serror P."/>
            <person name="Shin B.-S."/>
            <person name="Soldo B."/>
            <person name="Sorokin A."/>
            <person name="Tacconi E."/>
            <person name="Takagi T."/>
            <person name="Takahashi H."/>
            <person name="Takemaru K."/>
            <person name="Takeuchi M."/>
            <person name="Tamakoshi A."/>
            <person name="Tanaka T."/>
            <person name="Terpstra P."/>
            <person name="Tognoni A."/>
            <person name="Tosato V."/>
            <person name="Uchiyama S."/>
            <person name="Vandenbol M."/>
            <person name="Vannier F."/>
            <person name="Vassarotti A."/>
            <person name="Viari A."/>
            <person name="Wambutt R."/>
            <person name="Wedler E."/>
            <person name="Wedler H."/>
            <person name="Weitzenegger T."/>
            <person name="Winters P."/>
            <person name="Wipat A."/>
            <person name="Yamamoto H."/>
            <person name="Yamane K."/>
            <person name="Yasumoto K."/>
            <person name="Yata K."/>
            <person name="Yoshida K."/>
            <person name="Yoshikawa H.-F."/>
            <person name="Zumstein E."/>
            <person name="Yoshikawa H."/>
            <person name="Danchin A."/>
        </authorList>
    </citation>
    <scope>NUCLEOTIDE SEQUENCE [LARGE SCALE GENOMIC DNA]</scope>
    <source>
        <strain>168</strain>
    </source>
</reference>
<reference key="3">
    <citation type="journal article" date="1996" name="J. Bacteriol.">
        <title>Cold shock stress-induced proteins in Bacillus subtilis.</title>
        <authorList>
            <person name="Graumann P."/>
            <person name="Schroeder K."/>
            <person name="Schmid R."/>
            <person name="Marahiel M.A."/>
        </authorList>
    </citation>
    <scope>PROTEIN SEQUENCE OF 2-31</scope>
    <source>
        <strain>168 / JH642</strain>
    </source>
</reference>
<reference key="4">
    <citation type="journal article" date="2000" name="Microbiology">
        <title>Proteome analysis of Bacillus subtilis extracellular proteins: a two-dimensional protein electrophoretic study.</title>
        <authorList>
            <person name="Hirose I."/>
            <person name="Sano K."/>
            <person name="Shioda I."/>
            <person name="Kumano M."/>
            <person name="Nakamura K."/>
            <person name="Yamane K."/>
        </authorList>
    </citation>
    <scope>PROTEIN SEQUENCE OF 2-12</scope>
    <scope>SUBCELLULAR LOCATION</scope>
    <source>
        <strain>168</strain>
    </source>
</reference>
<reference key="5">
    <citation type="journal article" date="2000" name="J. Biol. Chem.">
        <title>Two glyceraldehyde-3-phosphate dehydrogenases with opposite physiological roles in a nonphotosynthetic bacterium.</title>
        <authorList>
            <person name="Fillinger S."/>
            <person name="Boschi-Muller S."/>
            <person name="Azza S."/>
            <person name="Dervyn E."/>
            <person name="Branlant G."/>
            <person name="Aymerich S."/>
        </authorList>
    </citation>
    <scope>FUNCTION</scope>
    <scope>CATALYTIC ACTIVITY</scope>
    <scope>PATHWAY</scope>
    <scope>DISRUPTION PHENOTYPE</scope>
    <scope>INDUCTION</scope>
</reference>
<reference key="6">
    <citation type="journal article" date="2003" name="Mol. Microbiol.">
        <title>Regulation of the central glycolytic genes in Bacillus subtilis: binding of the repressor CggR to its single DNA target sequence is modulated by fructose-1,6-bisphosphate.</title>
        <authorList>
            <person name="Doan T."/>
            <person name="Aymerich S."/>
        </authorList>
    </citation>
    <scope>TRANSCRIPTIONAL REGULATION BY CGGR</scope>
    <source>
        <strain>168</strain>
    </source>
</reference>
<reference key="7">
    <citation type="journal article" date="2021" name="Redox Biol.">
        <title>The Bacillus subtilis monothiol bacilliredoxin BrxC (YtxJ) and the Bdr (YpdA) disulfide reductase reduce S-bacillithiolated proteins.</title>
        <authorList>
            <person name="Gaballa A."/>
            <person name="Su T.T."/>
            <person name="Helmann J.D."/>
        </authorList>
    </citation>
    <scope>INTERACTION WITH BRXC</scope>
    <scope>PTM</scope>
    <scope>IDENTIFICATION BY MASS SPECTROMETRY</scope>
    <source>
        <strain evidence="9">168 / CU1065</strain>
    </source>
</reference>
<accession>P09124</accession>
<gene>
    <name evidence="8" type="primary">gapA</name>
    <name type="synonym">gap</name>
    <name type="ordered locus">BSU33940</name>
</gene>
<organism>
    <name type="scientific">Bacillus subtilis (strain 168)</name>
    <dbReference type="NCBI Taxonomy" id="224308"/>
    <lineage>
        <taxon>Bacteria</taxon>
        <taxon>Bacillati</taxon>
        <taxon>Bacillota</taxon>
        <taxon>Bacilli</taxon>
        <taxon>Bacillales</taxon>
        <taxon>Bacillaceae</taxon>
        <taxon>Bacillus</taxon>
    </lineage>
</organism>
<dbReference type="EC" id="1.2.1.12" evidence="4"/>
<dbReference type="EMBL" id="X13011">
    <property type="protein sequence ID" value="CAA31434.1"/>
    <property type="molecule type" value="Genomic_DNA"/>
</dbReference>
<dbReference type="EMBL" id="AL009126">
    <property type="protein sequence ID" value="CAB15399.1"/>
    <property type="molecule type" value="Genomic_DNA"/>
</dbReference>
<dbReference type="PIR" id="S02754">
    <property type="entry name" value="DEBSG"/>
</dbReference>
<dbReference type="RefSeq" id="NP_391274.1">
    <property type="nucleotide sequence ID" value="NC_000964.3"/>
</dbReference>
<dbReference type="RefSeq" id="WP_003219957.1">
    <property type="nucleotide sequence ID" value="NZ_OZ025638.1"/>
</dbReference>
<dbReference type="SMR" id="P09124"/>
<dbReference type="FunCoup" id="P09124">
    <property type="interactions" value="669"/>
</dbReference>
<dbReference type="IntAct" id="P09124">
    <property type="interactions" value="2"/>
</dbReference>
<dbReference type="MINT" id="P09124"/>
<dbReference type="STRING" id="224308.BSU33940"/>
<dbReference type="jPOST" id="P09124"/>
<dbReference type="PaxDb" id="224308-BSU33940"/>
<dbReference type="EnsemblBacteria" id="CAB15399">
    <property type="protein sequence ID" value="CAB15399"/>
    <property type="gene ID" value="BSU_33940"/>
</dbReference>
<dbReference type="GeneID" id="86872001"/>
<dbReference type="GeneID" id="938627"/>
<dbReference type="KEGG" id="bsu:BSU33940"/>
<dbReference type="PATRIC" id="fig|224308.179.peg.3680"/>
<dbReference type="eggNOG" id="COG0057">
    <property type="taxonomic scope" value="Bacteria"/>
</dbReference>
<dbReference type="InParanoid" id="P09124"/>
<dbReference type="OrthoDB" id="9803304at2"/>
<dbReference type="PhylomeDB" id="P09124"/>
<dbReference type="BioCyc" id="BSUB:BSU33940-MONOMER"/>
<dbReference type="UniPathway" id="UPA00109">
    <property type="reaction ID" value="UER00184"/>
</dbReference>
<dbReference type="PRO" id="PR:P09124"/>
<dbReference type="Proteomes" id="UP000001570">
    <property type="component" value="Chromosome"/>
</dbReference>
<dbReference type="GO" id="GO:0005737">
    <property type="term" value="C:cytoplasm"/>
    <property type="evidence" value="ECO:0007669"/>
    <property type="project" value="UniProtKB-SubCell"/>
</dbReference>
<dbReference type="GO" id="GO:0004365">
    <property type="term" value="F:glyceraldehyde-3-phosphate dehydrogenase (NAD+) (phosphorylating) activity"/>
    <property type="evidence" value="ECO:0000314"/>
    <property type="project" value="UniProtKB"/>
</dbReference>
<dbReference type="GO" id="GO:0051287">
    <property type="term" value="F:NAD binding"/>
    <property type="evidence" value="ECO:0000314"/>
    <property type="project" value="UniProtKB"/>
</dbReference>
<dbReference type="GO" id="GO:0050661">
    <property type="term" value="F:NADP binding"/>
    <property type="evidence" value="ECO:0007669"/>
    <property type="project" value="InterPro"/>
</dbReference>
<dbReference type="GO" id="GO:0006006">
    <property type="term" value="P:glucose metabolic process"/>
    <property type="evidence" value="ECO:0000318"/>
    <property type="project" value="GO_Central"/>
</dbReference>
<dbReference type="GO" id="GO:0006096">
    <property type="term" value="P:glycolytic process"/>
    <property type="evidence" value="ECO:0000315"/>
    <property type="project" value="UniProtKB"/>
</dbReference>
<dbReference type="CDD" id="cd18126">
    <property type="entry name" value="GAPDH_I_C"/>
    <property type="match status" value="1"/>
</dbReference>
<dbReference type="CDD" id="cd05214">
    <property type="entry name" value="GAPDH_I_N"/>
    <property type="match status" value="1"/>
</dbReference>
<dbReference type="FunFam" id="3.30.360.10:FF:000002">
    <property type="entry name" value="Glyceraldehyde-3-phosphate dehydrogenase"/>
    <property type="match status" value="1"/>
</dbReference>
<dbReference type="FunFam" id="3.40.50.720:FF:000001">
    <property type="entry name" value="Glyceraldehyde-3-phosphate dehydrogenase"/>
    <property type="match status" value="1"/>
</dbReference>
<dbReference type="Gene3D" id="3.30.360.10">
    <property type="entry name" value="Dihydrodipicolinate Reductase, domain 2"/>
    <property type="match status" value="1"/>
</dbReference>
<dbReference type="Gene3D" id="3.40.50.720">
    <property type="entry name" value="NAD(P)-binding Rossmann-like Domain"/>
    <property type="match status" value="1"/>
</dbReference>
<dbReference type="InterPro" id="IPR020831">
    <property type="entry name" value="GlycerAld/Erythrose_P_DH"/>
</dbReference>
<dbReference type="InterPro" id="IPR020830">
    <property type="entry name" value="GlycerAld_3-P_DH_AS"/>
</dbReference>
<dbReference type="InterPro" id="IPR020829">
    <property type="entry name" value="GlycerAld_3-P_DH_cat"/>
</dbReference>
<dbReference type="InterPro" id="IPR020828">
    <property type="entry name" value="GlycerAld_3-P_DH_NAD(P)-bd"/>
</dbReference>
<dbReference type="InterPro" id="IPR006424">
    <property type="entry name" value="Glyceraldehyde-3-P_DH_1"/>
</dbReference>
<dbReference type="InterPro" id="IPR036291">
    <property type="entry name" value="NAD(P)-bd_dom_sf"/>
</dbReference>
<dbReference type="NCBIfam" id="TIGR01534">
    <property type="entry name" value="GAPDH-I"/>
    <property type="match status" value="1"/>
</dbReference>
<dbReference type="PANTHER" id="PTHR43148">
    <property type="entry name" value="GLYCERALDEHYDE-3-PHOSPHATE DEHYDROGENASE 2"/>
    <property type="match status" value="1"/>
</dbReference>
<dbReference type="Pfam" id="PF02800">
    <property type="entry name" value="Gp_dh_C"/>
    <property type="match status" value="1"/>
</dbReference>
<dbReference type="Pfam" id="PF00044">
    <property type="entry name" value="Gp_dh_N"/>
    <property type="match status" value="1"/>
</dbReference>
<dbReference type="PIRSF" id="PIRSF000149">
    <property type="entry name" value="GAP_DH"/>
    <property type="match status" value="1"/>
</dbReference>
<dbReference type="PRINTS" id="PR00078">
    <property type="entry name" value="G3PDHDRGNASE"/>
</dbReference>
<dbReference type="SMART" id="SM00846">
    <property type="entry name" value="Gp_dh_N"/>
    <property type="match status" value="1"/>
</dbReference>
<dbReference type="SUPFAM" id="SSF55347">
    <property type="entry name" value="Glyceraldehyde-3-phosphate dehydrogenase-like, C-terminal domain"/>
    <property type="match status" value="1"/>
</dbReference>
<dbReference type="SUPFAM" id="SSF51735">
    <property type="entry name" value="NAD(P)-binding Rossmann-fold domains"/>
    <property type="match status" value="1"/>
</dbReference>
<dbReference type="PROSITE" id="PS00071">
    <property type="entry name" value="GAPDH"/>
    <property type="match status" value="1"/>
</dbReference>
<feature type="initiator methionine" description="Removed" evidence="3 7">
    <location>
        <position position="1"/>
    </location>
</feature>
<feature type="chain" id="PRO_0000145634" description="Glyceraldehyde-3-phosphate dehydrogenase 1">
    <location>
        <begin position="2"/>
        <end position="335"/>
    </location>
</feature>
<feature type="active site" description="Nucleophile" evidence="1">
    <location>
        <position position="152"/>
    </location>
</feature>
<feature type="binding site" evidence="1">
    <location>
        <begin position="12"/>
        <end position="13"/>
    </location>
    <ligand>
        <name>NAD(+)</name>
        <dbReference type="ChEBI" id="CHEBI:57540"/>
    </ligand>
</feature>
<feature type="binding site" evidence="1">
    <location>
        <position position="34"/>
    </location>
    <ligand>
        <name>NAD(+)</name>
        <dbReference type="ChEBI" id="CHEBI:57540"/>
    </ligand>
</feature>
<feature type="binding site" evidence="1">
    <location>
        <position position="78"/>
    </location>
    <ligand>
        <name>NAD(+)</name>
        <dbReference type="ChEBI" id="CHEBI:57540"/>
    </ligand>
</feature>
<feature type="binding site" evidence="1">
    <location>
        <position position="120"/>
    </location>
    <ligand>
        <name>NAD(+)</name>
        <dbReference type="ChEBI" id="CHEBI:57540"/>
    </ligand>
</feature>
<feature type="binding site" evidence="1">
    <location>
        <begin position="151"/>
        <end position="153"/>
    </location>
    <ligand>
        <name>D-glyceraldehyde 3-phosphate</name>
        <dbReference type="ChEBI" id="CHEBI:59776"/>
    </ligand>
</feature>
<feature type="binding site" evidence="1">
    <location>
        <position position="182"/>
    </location>
    <ligand>
        <name>D-glyceraldehyde 3-phosphate</name>
        <dbReference type="ChEBI" id="CHEBI:59776"/>
    </ligand>
</feature>
<feature type="binding site" evidence="1">
    <location>
        <position position="183"/>
    </location>
    <ligand>
        <name>NAD(+)</name>
        <dbReference type="ChEBI" id="CHEBI:57540"/>
    </ligand>
</feature>
<feature type="binding site" evidence="1">
    <location>
        <position position="197"/>
    </location>
    <ligand>
        <name>D-glyceraldehyde 3-phosphate</name>
        <dbReference type="ChEBI" id="CHEBI:59776"/>
    </ligand>
</feature>
<feature type="binding site" evidence="1">
    <location>
        <begin position="210"/>
        <end position="211"/>
    </location>
    <ligand>
        <name>D-glyceraldehyde 3-phosphate</name>
        <dbReference type="ChEBI" id="CHEBI:59776"/>
    </ligand>
</feature>
<feature type="binding site" evidence="1">
    <location>
        <position position="233"/>
    </location>
    <ligand>
        <name>D-glyceraldehyde 3-phosphate</name>
        <dbReference type="ChEBI" id="CHEBI:59776"/>
    </ligand>
</feature>
<feature type="binding site" evidence="1">
    <location>
        <position position="315"/>
    </location>
    <ligand>
        <name>NAD(+)</name>
        <dbReference type="ChEBI" id="CHEBI:57540"/>
    </ligand>
</feature>
<feature type="site" description="Activates thiol group during catalysis" evidence="2">
    <location>
        <position position="179"/>
    </location>
</feature>
<feature type="sequence conflict" description="In Ref. 4; AA sequence." evidence="10" ref="4">
    <original>V</original>
    <variation>VI</variation>
    <location>
        <position position="5"/>
    </location>
</feature>
<proteinExistence type="evidence at protein level"/>
<evidence type="ECO:0000250" key="1">
    <source>
        <dbReference type="UniProtKB" id="P00362"/>
    </source>
</evidence>
<evidence type="ECO:0000250" key="2">
    <source>
        <dbReference type="UniProtKB" id="Q6GIL8"/>
    </source>
</evidence>
<evidence type="ECO:0000269" key="3">
    <source>
    </source>
</evidence>
<evidence type="ECO:0000269" key="4">
    <source>
    </source>
</evidence>
<evidence type="ECO:0000269" key="5">
    <source>
    </source>
</evidence>
<evidence type="ECO:0000269" key="6">
    <source>
    </source>
</evidence>
<evidence type="ECO:0000269" key="7">
    <source>
    </source>
</evidence>
<evidence type="ECO:0000303" key="8">
    <source>
    </source>
</evidence>
<evidence type="ECO:0000303" key="9">
    <source>
    </source>
</evidence>
<evidence type="ECO:0000305" key="10"/>
<evidence type="ECO:0000305" key="11">
    <source>
    </source>
</evidence>
<keyword id="KW-0963">Cytoplasm</keyword>
<keyword id="KW-0903">Direct protein sequencing</keyword>
<keyword id="KW-0324">Glycolysis</keyword>
<keyword id="KW-0520">NAD</keyword>
<keyword id="KW-0547">Nucleotide-binding</keyword>
<keyword id="KW-0560">Oxidoreductase</keyword>
<keyword id="KW-1185">Reference proteome</keyword>
<protein>
    <recommendedName>
        <fullName evidence="8">Glyceraldehyde-3-phosphate dehydrogenase 1</fullName>
        <shortName evidence="8">GAPDH</shortName>
        <ecNumber evidence="4">1.2.1.12</ecNumber>
    </recommendedName>
    <alternativeName>
        <fullName evidence="8">NAD-dependent glyceraldehyde-3-phosphate dehydrogenase</fullName>
    </alternativeName>
</protein>
<name>G3P1_BACSU</name>
<sequence>MAVKVGINGFGRIGRNVFRAALNNPEVEVVAVNDLTDANMLAHLLQYDSVHGKLDAEVSVDGNNLVVNGKTIEVSAERDPAKLSWGKQGVEIVVESTGFFTKRADAAKHLEAGAKKVIISAPANEEDITIVMGVNEDKYDAANHDVISNASCTTNCLAPFAKVLNDKFGIKRGMMTTVHSYTNDQQILDLPHKDYRRARAAAENIIPTSTGAAKAVSLVLPELKGKLNGGAMRVPTPNVSLVDLVAELNQEVTAEEVNAALKEAAEGDLKGILGYSEEPLVSGDYNGNKNSSTIDALSTMVMEGSMVKVISWYDNESGYSNRVVDLAAYIAKKGL</sequence>